<protein>
    <recommendedName>
        <fullName evidence="1">Putative membrane protein insertion efficiency factor</fullName>
    </recommendedName>
</protein>
<proteinExistence type="inferred from homology"/>
<reference key="1">
    <citation type="submission" date="2007-02" db="EMBL/GenBank/DDBJ databases">
        <title>Complete sequence of chromosome 1 of Rhodobacter sphaeroides ATCC 17029.</title>
        <authorList>
            <person name="Copeland A."/>
            <person name="Lucas S."/>
            <person name="Lapidus A."/>
            <person name="Barry K."/>
            <person name="Detter J.C."/>
            <person name="Glavina del Rio T."/>
            <person name="Hammon N."/>
            <person name="Israni S."/>
            <person name="Dalin E."/>
            <person name="Tice H."/>
            <person name="Pitluck S."/>
            <person name="Kiss H."/>
            <person name="Brettin T."/>
            <person name="Bruce D."/>
            <person name="Han C."/>
            <person name="Tapia R."/>
            <person name="Gilna P."/>
            <person name="Schmutz J."/>
            <person name="Larimer F."/>
            <person name="Land M."/>
            <person name="Hauser L."/>
            <person name="Kyrpides N."/>
            <person name="Mikhailova N."/>
            <person name="Richardson P."/>
            <person name="Mackenzie C."/>
            <person name="Choudhary M."/>
            <person name="Donohue T.J."/>
            <person name="Kaplan S."/>
        </authorList>
    </citation>
    <scope>NUCLEOTIDE SEQUENCE [LARGE SCALE GENOMIC DNA]</scope>
    <source>
        <strain>ATCC 17029 / ATH 2.4.9</strain>
    </source>
</reference>
<sequence>MSPLAQVLALPVRAYRLLLSPWVGHGCRYQPTCSVYALDALERHGALKGGWLAARRILSCHPWGGSGYDPVPGADPEHDRRPRG</sequence>
<dbReference type="EMBL" id="CP000577">
    <property type="protein sequence ID" value="ABN77824.1"/>
    <property type="molecule type" value="Genomic_DNA"/>
</dbReference>
<dbReference type="KEGG" id="rsh:Rsph17029_2722"/>
<dbReference type="HOGENOM" id="CLU_144811_5_3_5"/>
<dbReference type="GO" id="GO:0005886">
    <property type="term" value="C:plasma membrane"/>
    <property type="evidence" value="ECO:0007669"/>
    <property type="project" value="UniProtKB-SubCell"/>
</dbReference>
<dbReference type="HAMAP" id="MF_00386">
    <property type="entry name" value="UPF0161_YidD"/>
    <property type="match status" value="1"/>
</dbReference>
<dbReference type="InterPro" id="IPR002696">
    <property type="entry name" value="Membr_insert_effic_factor_YidD"/>
</dbReference>
<dbReference type="NCBIfam" id="TIGR00278">
    <property type="entry name" value="membrane protein insertion efficiency factor YidD"/>
    <property type="match status" value="1"/>
</dbReference>
<dbReference type="PANTHER" id="PTHR33383">
    <property type="entry name" value="MEMBRANE PROTEIN INSERTION EFFICIENCY FACTOR-RELATED"/>
    <property type="match status" value="1"/>
</dbReference>
<dbReference type="PANTHER" id="PTHR33383:SF1">
    <property type="entry name" value="MEMBRANE PROTEIN INSERTION EFFICIENCY FACTOR-RELATED"/>
    <property type="match status" value="1"/>
</dbReference>
<dbReference type="Pfam" id="PF01809">
    <property type="entry name" value="YidD"/>
    <property type="match status" value="1"/>
</dbReference>
<dbReference type="SMART" id="SM01234">
    <property type="entry name" value="Haemolytic"/>
    <property type="match status" value="1"/>
</dbReference>
<evidence type="ECO:0000255" key="1">
    <source>
        <dbReference type="HAMAP-Rule" id="MF_00386"/>
    </source>
</evidence>
<evidence type="ECO:0000256" key="2">
    <source>
        <dbReference type="SAM" id="MobiDB-lite"/>
    </source>
</evidence>
<name>YIDD_CERS1</name>
<gene>
    <name type="ordered locus">Rsph17029_2722</name>
</gene>
<feature type="chain" id="PRO_1000013117" description="Putative membrane protein insertion efficiency factor">
    <location>
        <begin position="1"/>
        <end position="84"/>
    </location>
</feature>
<feature type="region of interest" description="Disordered" evidence="2">
    <location>
        <begin position="63"/>
        <end position="84"/>
    </location>
</feature>
<feature type="compositionally biased region" description="Basic and acidic residues" evidence="2">
    <location>
        <begin position="75"/>
        <end position="84"/>
    </location>
</feature>
<organism>
    <name type="scientific">Cereibacter sphaeroides (strain ATCC 17029 / ATH 2.4.9)</name>
    <name type="common">Rhodobacter sphaeroides</name>
    <dbReference type="NCBI Taxonomy" id="349101"/>
    <lineage>
        <taxon>Bacteria</taxon>
        <taxon>Pseudomonadati</taxon>
        <taxon>Pseudomonadota</taxon>
        <taxon>Alphaproteobacteria</taxon>
        <taxon>Rhodobacterales</taxon>
        <taxon>Paracoccaceae</taxon>
        <taxon>Cereibacter</taxon>
    </lineage>
</organism>
<comment type="function">
    <text evidence="1">Could be involved in insertion of integral membrane proteins into the membrane.</text>
</comment>
<comment type="subcellular location">
    <subcellularLocation>
        <location evidence="1">Cell inner membrane</location>
        <topology evidence="1">Peripheral membrane protein</topology>
        <orientation evidence="1">Cytoplasmic side</orientation>
    </subcellularLocation>
</comment>
<comment type="similarity">
    <text evidence="1">Belongs to the UPF0161 family.</text>
</comment>
<keyword id="KW-0997">Cell inner membrane</keyword>
<keyword id="KW-1003">Cell membrane</keyword>
<keyword id="KW-0472">Membrane</keyword>
<accession>A3PNA8</accession>